<comment type="function">
    <text evidence="1">Catalyzes the deamination of dCTP to dUTP.</text>
</comment>
<comment type="catalytic activity">
    <reaction evidence="1">
        <text>dCTP + H2O + H(+) = dUTP + NH4(+)</text>
        <dbReference type="Rhea" id="RHEA:22680"/>
        <dbReference type="ChEBI" id="CHEBI:15377"/>
        <dbReference type="ChEBI" id="CHEBI:15378"/>
        <dbReference type="ChEBI" id="CHEBI:28938"/>
        <dbReference type="ChEBI" id="CHEBI:61481"/>
        <dbReference type="ChEBI" id="CHEBI:61555"/>
        <dbReference type="EC" id="3.5.4.13"/>
    </reaction>
</comment>
<comment type="pathway">
    <text evidence="1">Pyrimidine metabolism; dUMP biosynthesis; dUMP from dCTP (dUTP route): step 1/2.</text>
</comment>
<comment type="subunit">
    <text evidence="1">Homotrimer.</text>
</comment>
<comment type="similarity">
    <text evidence="1">Belongs to the dCTP deaminase family.</text>
</comment>
<keyword id="KW-0378">Hydrolase</keyword>
<keyword id="KW-0546">Nucleotide metabolism</keyword>
<keyword id="KW-0547">Nucleotide-binding</keyword>
<keyword id="KW-1185">Reference proteome</keyword>
<feature type="chain" id="PRO_1000076626" description="dCTP deaminase">
    <location>
        <begin position="1"/>
        <end position="184"/>
    </location>
</feature>
<feature type="active site" description="Proton donor/acceptor" evidence="1">
    <location>
        <position position="133"/>
    </location>
</feature>
<feature type="binding site" evidence="1">
    <location>
        <begin position="107"/>
        <end position="112"/>
    </location>
    <ligand>
        <name>dCTP</name>
        <dbReference type="ChEBI" id="CHEBI:61481"/>
    </ligand>
</feature>
<feature type="binding site" evidence="1">
    <location>
        <position position="152"/>
    </location>
    <ligand>
        <name>dCTP</name>
        <dbReference type="ChEBI" id="CHEBI:61481"/>
    </ligand>
</feature>
<feature type="binding site" evidence="1">
    <location>
        <position position="166"/>
    </location>
    <ligand>
        <name>dCTP</name>
        <dbReference type="ChEBI" id="CHEBI:61481"/>
    </ligand>
</feature>
<feature type="binding site" evidence="1">
    <location>
        <position position="176"/>
    </location>
    <ligand>
        <name>dCTP</name>
        <dbReference type="ChEBI" id="CHEBI:61481"/>
    </ligand>
</feature>
<accession>A7NGH6</accession>
<proteinExistence type="inferred from homology"/>
<gene>
    <name evidence="1" type="primary">dcd</name>
    <name type="ordered locus">Rcas_0432</name>
</gene>
<dbReference type="EC" id="3.5.4.13" evidence="1"/>
<dbReference type="EMBL" id="CP000804">
    <property type="protein sequence ID" value="ABU56563.1"/>
    <property type="molecule type" value="Genomic_DNA"/>
</dbReference>
<dbReference type="RefSeq" id="WP_011997966.1">
    <property type="nucleotide sequence ID" value="NC_009767.1"/>
</dbReference>
<dbReference type="SMR" id="A7NGH6"/>
<dbReference type="STRING" id="383372.Rcas_0432"/>
<dbReference type="KEGG" id="rca:Rcas_0432"/>
<dbReference type="eggNOG" id="COG0717">
    <property type="taxonomic scope" value="Bacteria"/>
</dbReference>
<dbReference type="HOGENOM" id="CLU_087476_4_0_0"/>
<dbReference type="OrthoDB" id="9780202at2"/>
<dbReference type="UniPathway" id="UPA00610">
    <property type="reaction ID" value="UER00665"/>
</dbReference>
<dbReference type="Proteomes" id="UP000000263">
    <property type="component" value="Chromosome"/>
</dbReference>
<dbReference type="GO" id="GO:0008829">
    <property type="term" value="F:dCTP deaminase activity"/>
    <property type="evidence" value="ECO:0007669"/>
    <property type="project" value="UniProtKB-UniRule"/>
</dbReference>
<dbReference type="GO" id="GO:0000166">
    <property type="term" value="F:nucleotide binding"/>
    <property type="evidence" value="ECO:0007669"/>
    <property type="project" value="UniProtKB-KW"/>
</dbReference>
<dbReference type="GO" id="GO:0006226">
    <property type="term" value="P:dUMP biosynthetic process"/>
    <property type="evidence" value="ECO:0007669"/>
    <property type="project" value="UniProtKB-UniPathway"/>
</dbReference>
<dbReference type="GO" id="GO:0006229">
    <property type="term" value="P:dUTP biosynthetic process"/>
    <property type="evidence" value="ECO:0007669"/>
    <property type="project" value="UniProtKB-UniRule"/>
</dbReference>
<dbReference type="GO" id="GO:0015949">
    <property type="term" value="P:nucleobase-containing small molecule interconversion"/>
    <property type="evidence" value="ECO:0007669"/>
    <property type="project" value="TreeGrafter"/>
</dbReference>
<dbReference type="CDD" id="cd07557">
    <property type="entry name" value="trimeric_dUTPase"/>
    <property type="match status" value="1"/>
</dbReference>
<dbReference type="FunFam" id="2.70.40.10:FF:000001">
    <property type="entry name" value="dCTP deaminase"/>
    <property type="match status" value="1"/>
</dbReference>
<dbReference type="Gene3D" id="2.70.40.10">
    <property type="match status" value="1"/>
</dbReference>
<dbReference type="HAMAP" id="MF_00146">
    <property type="entry name" value="dCTP_deaminase"/>
    <property type="match status" value="1"/>
</dbReference>
<dbReference type="InterPro" id="IPR011962">
    <property type="entry name" value="dCTP_deaminase"/>
</dbReference>
<dbReference type="InterPro" id="IPR036157">
    <property type="entry name" value="dUTPase-like_sf"/>
</dbReference>
<dbReference type="InterPro" id="IPR033704">
    <property type="entry name" value="dUTPase_trimeric"/>
</dbReference>
<dbReference type="NCBIfam" id="TIGR02274">
    <property type="entry name" value="dCTP_deam"/>
    <property type="match status" value="1"/>
</dbReference>
<dbReference type="PANTHER" id="PTHR42680">
    <property type="entry name" value="DCTP DEAMINASE"/>
    <property type="match status" value="1"/>
</dbReference>
<dbReference type="PANTHER" id="PTHR42680:SF3">
    <property type="entry name" value="DCTP DEAMINASE"/>
    <property type="match status" value="1"/>
</dbReference>
<dbReference type="Pfam" id="PF22769">
    <property type="entry name" value="DCD"/>
    <property type="match status" value="1"/>
</dbReference>
<dbReference type="SUPFAM" id="SSF51283">
    <property type="entry name" value="dUTPase-like"/>
    <property type="match status" value="1"/>
</dbReference>
<reference key="1">
    <citation type="submission" date="2007-08" db="EMBL/GenBank/DDBJ databases">
        <title>Complete sequence of Roseiflexus castenholzii DSM 13941.</title>
        <authorList>
            <consortium name="US DOE Joint Genome Institute"/>
            <person name="Copeland A."/>
            <person name="Lucas S."/>
            <person name="Lapidus A."/>
            <person name="Barry K."/>
            <person name="Glavina del Rio T."/>
            <person name="Dalin E."/>
            <person name="Tice H."/>
            <person name="Pitluck S."/>
            <person name="Thompson L.S."/>
            <person name="Brettin T."/>
            <person name="Bruce D."/>
            <person name="Detter J.C."/>
            <person name="Han C."/>
            <person name="Tapia R."/>
            <person name="Schmutz J."/>
            <person name="Larimer F."/>
            <person name="Land M."/>
            <person name="Hauser L."/>
            <person name="Kyrpides N."/>
            <person name="Mikhailova N."/>
            <person name="Bryant D.A."/>
            <person name="Hanada S."/>
            <person name="Tsukatani Y."/>
            <person name="Richardson P."/>
        </authorList>
    </citation>
    <scope>NUCLEOTIDE SEQUENCE [LARGE SCALE GENOMIC DNA]</scope>
    <source>
        <strain>DSM 13941 / HLO8</strain>
    </source>
</reference>
<name>DCD_ROSCS</name>
<evidence type="ECO:0000255" key="1">
    <source>
        <dbReference type="HAMAP-Rule" id="MF_00146"/>
    </source>
</evidence>
<protein>
    <recommendedName>
        <fullName evidence="1">dCTP deaminase</fullName>
        <ecNumber evidence="1">3.5.4.13</ecNumber>
    </recommendedName>
    <alternativeName>
        <fullName evidence="1">Deoxycytidine triphosphate deaminase</fullName>
    </alternativeName>
</protein>
<organism>
    <name type="scientific">Roseiflexus castenholzii (strain DSM 13941 / HLO8)</name>
    <dbReference type="NCBI Taxonomy" id="383372"/>
    <lineage>
        <taxon>Bacteria</taxon>
        <taxon>Bacillati</taxon>
        <taxon>Chloroflexota</taxon>
        <taxon>Chloroflexia</taxon>
        <taxon>Chloroflexales</taxon>
        <taxon>Roseiflexineae</taxon>
        <taxon>Roseiflexaceae</taxon>
        <taxon>Roseiflexus</taxon>
    </lineage>
</organism>
<sequence length="184" mass="20723">MTIKSDRWIQVMAREYGMIEPFVAEQVRGGIISYGLSSYGYDMRVADEFKVFTNVFNTLVDPKHFDPRSFVDIRGDYCDIPPNSFALARSVEYFRIPRNVLCIVLGKSTIARCGIIVNVTPLEPEWCGYVTIEISNTTPLPARIYANEGIAQVLFLESDEPPLVSYADKAGKYQNQTGVVPPRL</sequence>